<protein>
    <recommendedName>
        <fullName evidence="1">Co-chaperonin GroES</fullName>
    </recommendedName>
    <alternativeName>
        <fullName evidence="1">10 kDa chaperonin</fullName>
    </alternativeName>
    <alternativeName>
        <fullName evidence="1">Chaperonin-10</fullName>
        <shortName evidence="1">Cpn10</shortName>
    </alternativeName>
</protein>
<reference key="1">
    <citation type="journal article" date="2011" name="J. Bacteriol.">
        <title>Complete genome sequence of the Thermophilic Bacterium Exiguobacterium sp. AT1b.</title>
        <authorList>
            <person name="Vishnivetskaya T.A."/>
            <person name="Lucas S."/>
            <person name="Copeland A."/>
            <person name="Lapidus A."/>
            <person name="Glavina del Rio T."/>
            <person name="Dalin E."/>
            <person name="Tice H."/>
            <person name="Bruce D.C."/>
            <person name="Goodwin L.A."/>
            <person name="Pitluck S."/>
            <person name="Saunders E."/>
            <person name="Brettin T."/>
            <person name="Detter C."/>
            <person name="Han C."/>
            <person name="Larimer F."/>
            <person name="Land M.L."/>
            <person name="Hauser L.J."/>
            <person name="Kyrpides N.C."/>
            <person name="Ovchinnikova G."/>
            <person name="Kathariou S."/>
            <person name="Ramaley R.F."/>
            <person name="Rodrigues D.F."/>
            <person name="Hendrix C."/>
            <person name="Richardson P."/>
            <person name="Tiedje J.M."/>
        </authorList>
    </citation>
    <scope>NUCLEOTIDE SEQUENCE [LARGE SCALE GENOMIC DNA]</scope>
    <source>
        <strain>ATCC BAA-1283 / AT1b</strain>
    </source>
</reference>
<sequence length="94" mass="10318">MLKPLGDRVIIEVVEKEEKTIGGIVLPDTAKEKPQQGKVVAVGTGRVTDEGKRIDLDVKENDLVIYSKYAGTEVKHDGKEYLIVRESDILAIVG</sequence>
<dbReference type="EMBL" id="CP001615">
    <property type="protein sequence ID" value="ACQ71043.1"/>
    <property type="molecule type" value="Genomic_DNA"/>
</dbReference>
<dbReference type="RefSeq" id="WP_015880602.1">
    <property type="nucleotide sequence ID" value="NC_012673.1"/>
</dbReference>
<dbReference type="SMR" id="C4L1L1"/>
<dbReference type="STRING" id="360911.EAT1b_2120"/>
<dbReference type="GeneID" id="94373250"/>
<dbReference type="KEGG" id="eat:EAT1b_2120"/>
<dbReference type="eggNOG" id="COG0234">
    <property type="taxonomic scope" value="Bacteria"/>
</dbReference>
<dbReference type="HOGENOM" id="CLU_132825_2_0_9"/>
<dbReference type="OrthoDB" id="9806791at2"/>
<dbReference type="Proteomes" id="UP000000716">
    <property type="component" value="Chromosome"/>
</dbReference>
<dbReference type="GO" id="GO:0005737">
    <property type="term" value="C:cytoplasm"/>
    <property type="evidence" value="ECO:0007669"/>
    <property type="project" value="UniProtKB-SubCell"/>
</dbReference>
<dbReference type="GO" id="GO:0005524">
    <property type="term" value="F:ATP binding"/>
    <property type="evidence" value="ECO:0007669"/>
    <property type="project" value="InterPro"/>
</dbReference>
<dbReference type="GO" id="GO:0046872">
    <property type="term" value="F:metal ion binding"/>
    <property type="evidence" value="ECO:0007669"/>
    <property type="project" value="TreeGrafter"/>
</dbReference>
<dbReference type="GO" id="GO:0044183">
    <property type="term" value="F:protein folding chaperone"/>
    <property type="evidence" value="ECO:0007669"/>
    <property type="project" value="InterPro"/>
</dbReference>
<dbReference type="GO" id="GO:0051087">
    <property type="term" value="F:protein-folding chaperone binding"/>
    <property type="evidence" value="ECO:0007669"/>
    <property type="project" value="TreeGrafter"/>
</dbReference>
<dbReference type="GO" id="GO:0051082">
    <property type="term" value="F:unfolded protein binding"/>
    <property type="evidence" value="ECO:0007669"/>
    <property type="project" value="TreeGrafter"/>
</dbReference>
<dbReference type="GO" id="GO:0051085">
    <property type="term" value="P:chaperone cofactor-dependent protein refolding"/>
    <property type="evidence" value="ECO:0007669"/>
    <property type="project" value="TreeGrafter"/>
</dbReference>
<dbReference type="CDD" id="cd00320">
    <property type="entry name" value="cpn10"/>
    <property type="match status" value="1"/>
</dbReference>
<dbReference type="FunFam" id="2.30.33.40:FF:000001">
    <property type="entry name" value="10 kDa chaperonin"/>
    <property type="match status" value="1"/>
</dbReference>
<dbReference type="Gene3D" id="2.30.33.40">
    <property type="entry name" value="GroES chaperonin"/>
    <property type="match status" value="1"/>
</dbReference>
<dbReference type="HAMAP" id="MF_00580">
    <property type="entry name" value="CH10"/>
    <property type="match status" value="1"/>
</dbReference>
<dbReference type="InterPro" id="IPR020818">
    <property type="entry name" value="Chaperonin_GroES"/>
</dbReference>
<dbReference type="InterPro" id="IPR037124">
    <property type="entry name" value="Chaperonin_GroES_sf"/>
</dbReference>
<dbReference type="InterPro" id="IPR018369">
    <property type="entry name" value="Chaprnonin_Cpn10_CS"/>
</dbReference>
<dbReference type="InterPro" id="IPR011032">
    <property type="entry name" value="GroES-like_sf"/>
</dbReference>
<dbReference type="NCBIfam" id="NF001530">
    <property type="entry name" value="PRK00364.1-6"/>
    <property type="match status" value="1"/>
</dbReference>
<dbReference type="NCBIfam" id="NF001531">
    <property type="entry name" value="PRK00364.2-2"/>
    <property type="match status" value="1"/>
</dbReference>
<dbReference type="NCBIfam" id="NF001533">
    <property type="entry name" value="PRK00364.2-4"/>
    <property type="match status" value="1"/>
</dbReference>
<dbReference type="NCBIfam" id="NF001534">
    <property type="entry name" value="PRK00364.2-5"/>
    <property type="match status" value="1"/>
</dbReference>
<dbReference type="PANTHER" id="PTHR10772">
    <property type="entry name" value="10 KDA HEAT SHOCK PROTEIN"/>
    <property type="match status" value="1"/>
</dbReference>
<dbReference type="PANTHER" id="PTHR10772:SF58">
    <property type="entry name" value="CO-CHAPERONIN GROES"/>
    <property type="match status" value="1"/>
</dbReference>
<dbReference type="Pfam" id="PF00166">
    <property type="entry name" value="Cpn10"/>
    <property type="match status" value="1"/>
</dbReference>
<dbReference type="PRINTS" id="PR00297">
    <property type="entry name" value="CHAPERONIN10"/>
</dbReference>
<dbReference type="SMART" id="SM00883">
    <property type="entry name" value="Cpn10"/>
    <property type="match status" value="1"/>
</dbReference>
<dbReference type="SUPFAM" id="SSF50129">
    <property type="entry name" value="GroES-like"/>
    <property type="match status" value="1"/>
</dbReference>
<dbReference type="PROSITE" id="PS00681">
    <property type="entry name" value="CHAPERONINS_CPN10"/>
    <property type="match status" value="1"/>
</dbReference>
<proteinExistence type="inferred from homology"/>
<comment type="function">
    <text evidence="1">Together with the chaperonin GroEL, plays an essential role in assisting protein folding. The GroEL-GroES system forms a nano-cage that allows encapsulation of the non-native substrate proteins and provides a physical environment optimized to promote and accelerate protein folding. GroES binds to the apical surface of the GroEL ring, thereby capping the opening of the GroEL channel.</text>
</comment>
<comment type="subunit">
    <text evidence="1">Heptamer of 7 subunits arranged in a ring. Interacts with the chaperonin GroEL.</text>
</comment>
<comment type="subcellular location">
    <subcellularLocation>
        <location evidence="1">Cytoplasm</location>
    </subcellularLocation>
</comment>
<comment type="similarity">
    <text evidence="1">Belongs to the GroES chaperonin family.</text>
</comment>
<feature type="chain" id="PRO_1000212114" description="Co-chaperonin GroES">
    <location>
        <begin position="1"/>
        <end position="94"/>
    </location>
</feature>
<name>CH10_EXISA</name>
<keyword id="KW-0143">Chaperone</keyword>
<keyword id="KW-0963">Cytoplasm</keyword>
<accession>C4L1L1</accession>
<organism>
    <name type="scientific">Exiguobacterium sp. (strain ATCC BAA-1283 / AT1b)</name>
    <dbReference type="NCBI Taxonomy" id="360911"/>
    <lineage>
        <taxon>Bacteria</taxon>
        <taxon>Bacillati</taxon>
        <taxon>Bacillota</taxon>
        <taxon>Bacilli</taxon>
        <taxon>Bacillales</taxon>
        <taxon>Bacillales Family XII. Incertae Sedis</taxon>
        <taxon>Exiguobacterium</taxon>
    </lineage>
</organism>
<gene>
    <name evidence="1" type="primary">groES</name>
    <name evidence="1" type="synonym">groS</name>
    <name type="ordered locus">EAT1b_2120</name>
</gene>
<evidence type="ECO:0000255" key="1">
    <source>
        <dbReference type="HAMAP-Rule" id="MF_00580"/>
    </source>
</evidence>